<keyword id="KW-0028">Amino-acid biosynthesis</keyword>
<keyword id="KW-0055">Arginine biosynthesis</keyword>
<keyword id="KW-0067">ATP-binding</keyword>
<keyword id="KW-0963">Cytoplasm</keyword>
<keyword id="KW-0436">Ligase</keyword>
<keyword id="KW-0547">Nucleotide-binding</keyword>
<accession>A8LE46</accession>
<protein>
    <recommendedName>
        <fullName evidence="1">Argininosuccinate synthase</fullName>
        <ecNumber evidence="1">6.3.4.5</ecNumber>
    </recommendedName>
    <alternativeName>
        <fullName evidence="1">Citrulline--aspartate ligase</fullName>
    </alternativeName>
</protein>
<gene>
    <name evidence="1" type="primary">argG</name>
    <name type="ordered locus">Franean1_1743</name>
</gene>
<dbReference type="EC" id="6.3.4.5" evidence="1"/>
<dbReference type="EMBL" id="CP000820">
    <property type="protein sequence ID" value="ABW11181.1"/>
    <property type="molecule type" value="Genomic_DNA"/>
</dbReference>
<dbReference type="RefSeq" id="WP_020459353.1">
    <property type="nucleotide sequence ID" value="NC_009921.1"/>
</dbReference>
<dbReference type="SMR" id="A8LE46"/>
<dbReference type="STRING" id="298653.Franean1_1743"/>
<dbReference type="KEGG" id="fre:Franean1_1743"/>
<dbReference type="eggNOG" id="COG0137">
    <property type="taxonomic scope" value="Bacteria"/>
</dbReference>
<dbReference type="HOGENOM" id="CLU_032784_4_2_11"/>
<dbReference type="UniPathway" id="UPA00068">
    <property type="reaction ID" value="UER00113"/>
</dbReference>
<dbReference type="GO" id="GO:0005737">
    <property type="term" value="C:cytoplasm"/>
    <property type="evidence" value="ECO:0007669"/>
    <property type="project" value="UniProtKB-SubCell"/>
</dbReference>
<dbReference type="GO" id="GO:0004055">
    <property type="term" value="F:argininosuccinate synthase activity"/>
    <property type="evidence" value="ECO:0007669"/>
    <property type="project" value="UniProtKB-UniRule"/>
</dbReference>
<dbReference type="GO" id="GO:0005524">
    <property type="term" value="F:ATP binding"/>
    <property type="evidence" value="ECO:0007669"/>
    <property type="project" value="UniProtKB-UniRule"/>
</dbReference>
<dbReference type="GO" id="GO:0000053">
    <property type="term" value="P:argininosuccinate metabolic process"/>
    <property type="evidence" value="ECO:0007669"/>
    <property type="project" value="TreeGrafter"/>
</dbReference>
<dbReference type="GO" id="GO:0006526">
    <property type="term" value="P:L-arginine biosynthetic process"/>
    <property type="evidence" value="ECO:0007669"/>
    <property type="project" value="UniProtKB-UniRule"/>
</dbReference>
<dbReference type="GO" id="GO:0000050">
    <property type="term" value="P:urea cycle"/>
    <property type="evidence" value="ECO:0007669"/>
    <property type="project" value="TreeGrafter"/>
</dbReference>
<dbReference type="CDD" id="cd01999">
    <property type="entry name" value="ASS"/>
    <property type="match status" value="1"/>
</dbReference>
<dbReference type="FunFam" id="3.40.50.620:FF:000038">
    <property type="entry name" value="Argininosuccinate synthase"/>
    <property type="match status" value="1"/>
</dbReference>
<dbReference type="FunFam" id="3.90.1260.10:FF:000007">
    <property type="entry name" value="Argininosuccinate synthase"/>
    <property type="match status" value="1"/>
</dbReference>
<dbReference type="Gene3D" id="3.90.1260.10">
    <property type="entry name" value="Argininosuccinate synthetase, chain A, domain 2"/>
    <property type="match status" value="1"/>
</dbReference>
<dbReference type="Gene3D" id="3.40.50.620">
    <property type="entry name" value="HUPs"/>
    <property type="match status" value="1"/>
</dbReference>
<dbReference type="Gene3D" id="1.20.5.470">
    <property type="entry name" value="Single helix bin"/>
    <property type="match status" value="1"/>
</dbReference>
<dbReference type="HAMAP" id="MF_00005">
    <property type="entry name" value="Arg_succ_synth_type1"/>
    <property type="match status" value="1"/>
</dbReference>
<dbReference type="InterPro" id="IPR048268">
    <property type="entry name" value="Arginosuc_syn_C"/>
</dbReference>
<dbReference type="InterPro" id="IPR048267">
    <property type="entry name" value="Arginosuc_syn_N"/>
</dbReference>
<dbReference type="InterPro" id="IPR001518">
    <property type="entry name" value="Arginosuc_synth"/>
</dbReference>
<dbReference type="InterPro" id="IPR018223">
    <property type="entry name" value="Arginosuc_synth_CS"/>
</dbReference>
<dbReference type="InterPro" id="IPR023434">
    <property type="entry name" value="Arginosuc_synth_type_1_subfam"/>
</dbReference>
<dbReference type="InterPro" id="IPR024074">
    <property type="entry name" value="AS_cat/multimer_dom_body"/>
</dbReference>
<dbReference type="InterPro" id="IPR014729">
    <property type="entry name" value="Rossmann-like_a/b/a_fold"/>
</dbReference>
<dbReference type="NCBIfam" id="TIGR00032">
    <property type="entry name" value="argG"/>
    <property type="match status" value="1"/>
</dbReference>
<dbReference type="NCBIfam" id="NF001770">
    <property type="entry name" value="PRK00509.1"/>
    <property type="match status" value="1"/>
</dbReference>
<dbReference type="PANTHER" id="PTHR11587">
    <property type="entry name" value="ARGININOSUCCINATE SYNTHASE"/>
    <property type="match status" value="1"/>
</dbReference>
<dbReference type="PANTHER" id="PTHR11587:SF2">
    <property type="entry name" value="ARGININOSUCCINATE SYNTHASE"/>
    <property type="match status" value="1"/>
</dbReference>
<dbReference type="Pfam" id="PF20979">
    <property type="entry name" value="Arginosuc_syn_C"/>
    <property type="match status" value="1"/>
</dbReference>
<dbReference type="Pfam" id="PF00764">
    <property type="entry name" value="Arginosuc_synth"/>
    <property type="match status" value="1"/>
</dbReference>
<dbReference type="SUPFAM" id="SSF52402">
    <property type="entry name" value="Adenine nucleotide alpha hydrolases-like"/>
    <property type="match status" value="1"/>
</dbReference>
<dbReference type="SUPFAM" id="SSF69864">
    <property type="entry name" value="Argininosuccinate synthetase, C-terminal domain"/>
    <property type="match status" value="1"/>
</dbReference>
<dbReference type="PROSITE" id="PS00564">
    <property type="entry name" value="ARGININOSUCCIN_SYN_1"/>
    <property type="match status" value="1"/>
</dbReference>
<dbReference type="PROSITE" id="PS00565">
    <property type="entry name" value="ARGININOSUCCIN_SYN_2"/>
    <property type="match status" value="1"/>
</dbReference>
<organism>
    <name type="scientific">Parafrankia sp. (strain EAN1pec)</name>
    <dbReference type="NCBI Taxonomy" id="298653"/>
    <lineage>
        <taxon>Bacteria</taxon>
        <taxon>Bacillati</taxon>
        <taxon>Actinomycetota</taxon>
        <taxon>Actinomycetes</taxon>
        <taxon>Frankiales</taxon>
        <taxon>Frankiaceae</taxon>
        <taxon>Parafrankia</taxon>
    </lineage>
</organism>
<proteinExistence type="inferred from homology"/>
<comment type="catalytic activity">
    <reaction evidence="1">
        <text>L-citrulline + L-aspartate + ATP = 2-(N(omega)-L-arginino)succinate + AMP + diphosphate + H(+)</text>
        <dbReference type="Rhea" id="RHEA:10932"/>
        <dbReference type="ChEBI" id="CHEBI:15378"/>
        <dbReference type="ChEBI" id="CHEBI:29991"/>
        <dbReference type="ChEBI" id="CHEBI:30616"/>
        <dbReference type="ChEBI" id="CHEBI:33019"/>
        <dbReference type="ChEBI" id="CHEBI:57472"/>
        <dbReference type="ChEBI" id="CHEBI:57743"/>
        <dbReference type="ChEBI" id="CHEBI:456215"/>
        <dbReference type="EC" id="6.3.4.5"/>
    </reaction>
</comment>
<comment type="pathway">
    <text evidence="1">Amino-acid biosynthesis; L-arginine biosynthesis; L-arginine from L-ornithine and carbamoyl phosphate: step 2/3.</text>
</comment>
<comment type="subunit">
    <text evidence="1">Homotetramer.</text>
</comment>
<comment type="subcellular location">
    <subcellularLocation>
        <location evidence="1">Cytoplasm</location>
    </subcellularLocation>
</comment>
<comment type="similarity">
    <text evidence="1">Belongs to the argininosuccinate synthase family. Type 1 subfamily.</text>
</comment>
<name>ASSY_PARS2</name>
<evidence type="ECO:0000255" key="1">
    <source>
        <dbReference type="HAMAP-Rule" id="MF_00005"/>
    </source>
</evidence>
<feature type="chain" id="PRO_1000089037" description="Argininosuccinate synthase">
    <location>
        <begin position="1"/>
        <end position="400"/>
    </location>
</feature>
<feature type="binding site" evidence="1">
    <location>
        <begin position="8"/>
        <end position="16"/>
    </location>
    <ligand>
        <name>ATP</name>
        <dbReference type="ChEBI" id="CHEBI:30616"/>
    </ligand>
</feature>
<feature type="binding site" evidence="1">
    <location>
        <position position="87"/>
    </location>
    <ligand>
        <name>L-citrulline</name>
        <dbReference type="ChEBI" id="CHEBI:57743"/>
    </ligand>
</feature>
<feature type="binding site" evidence="1">
    <location>
        <position position="92"/>
    </location>
    <ligand>
        <name>L-citrulline</name>
        <dbReference type="ChEBI" id="CHEBI:57743"/>
    </ligand>
</feature>
<feature type="binding site" evidence="1">
    <location>
        <position position="117"/>
    </location>
    <ligand>
        <name>ATP</name>
        <dbReference type="ChEBI" id="CHEBI:30616"/>
    </ligand>
</feature>
<feature type="binding site" evidence="1">
    <location>
        <position position="119"/>
    </location>
    <ligand>
        <name>L-aspartate</name>
        <dbReference type="ChEBI" id="CHEBI:29991"/>
    </ligand>
</feature>
<feature type="binding site" evidence="1">
    <location>
        <position position="123"/>
    </location>
    <ligand>
        <name>L-aspartate</name>
        <dbReference type="ChEBI" id="CHEBI:29991"/>
    </ligand>
</feature>
<feature type="binding site" evidence="1">
    <location>
        <position position="123"/>
    </location>
    <ligand>
        <name>L-citrulline</name>
        <dbReference type="ChEBI" id="CHEBI:57743"/>
    </ligand>
</feature>
<feature type="binding site" evidence="1">
    <location>
        <position position="124"/>
    </location>
    <ligand>
        <name>L-aspartate</name>
        <dbReference type="ChEBI" id="CHEBI:29991"/>
    </ligand>
</feature>
<feature type="binding site" evidence="1">
    <location>
        <position position="127"/>
    </location>
    <ligand>
        <name>L-citrulline</name>
        <dbReference type="ChEBI" id="CHEBI:57743"/>
    </ligand>
</feature>
<feature type="binding site" evidence="1">
    <location>
        <position position="175"/>
    </location>
    <ligand>
        <name>L-citrulline</name>
        <dbReference type="ChEBI" id="CHEBI:57743"/>
    </ligand>
</feature>
<feature type="binding site" evidence="1">
    <location>
        <position position="259"/>
    </location>
    <ligand>
        <name>L-citrulline</name>
        <dbReference type="ChEBI" id="CHEBI:57743"/>
    </ligand>
</feature>
<feature type="binding site" evidence="1">
    <location>
        <position position="271"/>
    </location>
    <ligand>
        <name>L-citrulline</name>
        <dbReference type="ChEBI" id="CHEBI:57743"/>
    </ligand>
</feature>
<reference key="1">
    <citation type="journal article" date="2007" name="Genome Res.">
        <title>Genome characteristics of facultatively symbiotic Frankia sp. strains reflect host range and host plant biogeography.</title>
        <authorList>
            <person name="Normand P."/>
            <person name="Lapierre P."/>
            <person name="Tisa L.S."/>
            <person name="Gogarten J.P."/>
            <person name="Alloisio N."/>
            <person name="Bagnarol E."/>
            <person name="Bassi C.A."/>
            <person name="Berry A.M."/>
            <person name="Bickhart D.M."/>
            <person name="Choisne N."/>
            <person name="Couloux A."/>
            <person name="Cournoyer B."/>
            <person name="Cruveiller S."/>
            <person name="Daubin V."/>
            <person name="Demange N."/>
            <person name="Francino M.P."/>
            <person name="Goltsman E."/>
            <person name="Huang Y."/>
            <person name="Kopp O.R."/>
            <person name="Labarre L."/>
            <person name="Lapidus A."/>
            <person name="Lavire C."/>
            <person name="Marechal J."/>
            <person name="Martinez M."/>
            <person name="Mastronunzio J.E."/>
            <person name="Mullin B.C."/>
            <person name="Niemann J."/>
            <person name="Pujic P."/>
            <person name="Rawnsley T."/>
            <person name="Rouy Z."/>
            <person name="Schenowitz C."/>
            <person name="Sellstedt A."/>
            <person name="Tavares F."/>
            <person name="Tomkins J.P."/>
            <person name="Vallenet D."/>
            <person name="Valverde C."/>
            <person name="Wall L.G."/>
            <person name="Wang Y."/>
            <person name="Medigue C."/>
            <person name="Benson D.R."/>
        </authorList>
    </citation>
    <scope>NUCLEOTIDE SEQUENCE [LARGE SCALE GENOMIC DNA]</scope>
    <source>
        <strain>EAN1pec</strain>
    </source>
</reference>
<sequence>MTERVVLAYSGGLDTSVAIGWIGAETGAEVIALAVDVGQGGEDLEAIRQRAFTCGAVESIVVDAREEFAASFVAPAIRANALYMDRYPLISSLSRPIIVKHLVEAAKQHGADAISHGCTGKGNDQVRFEVGVMALAPGLRVLAPVRDSGMTRDKAIAFAEERGLPIDVSKKSPYSIDQNLWGRTAECGVLEDPWAQPPEDVFVYTADPTVSRPSDEVTISFTDGLPTGLDGRALSLVDLVAELNTRAGAQGVGRIDMIEDRLVGIKSREIYECPAAITLLTAHRDLEDLTLERDVARFKRGIDQRWGEIVYDGLWFSPLRAALDAFVDSASVGVTGDVRIRLAGGVAQVVGRRSPGSLYDHALATYDAGDQFDQTDARGFIELWGLPTKVWAAREQRLNP</sequence>